<name>PILC_MYXXD</name>
<organism>
    <name type="scientific">Myxococcus xanthus (strain DK1622)</name>
    <dbReference type="NCBI Taxonomy" id="246197"/>
    <lineage>
        <taxon>Bacteria</taxon>
        <taxon>Pseudomonadati</taxon>
        <taxon>Myxococcota</taxon>
        <taxon>Myxococcia</taxon>
        <taxon>Myxococcales</taxon>
        <taxon>Cystobacterineae</taxon>
        <taxon>Myxococcaceae</taxon>
        <taxon>Myxococcus</taxon>
    </lineage>
</organism>
<evidence type="ECO:0000250" key="1">
    <source>
        <dbReference type="UniProtKB" id="P22609"/>
    </source>
</evidence>
<evidence type="ECO:0000250" key="2">
    <source>
        <dbReference type="UniProtKB" id="Q5SK58"/>
    </source>
</evidence>
<evidence type="ECO:0000255" key="3"/>
<evidence type="ECO:0000269" key="4">
    <source>
    </source>
</evidence>
<evidence type="ECO:0000269" key="5">
    <source>
    </source>
</evidence>
<evidence type="ECO:0007744" key="6">
    <source>
        <dbReference type="PDB" id="3JC8"/>
    </source>
</evidence>
<evidence type="ECO:0007744" key="7">
    <source>
        <dbReference type="PDB" id="3JC9"/>
    </source>
</evidence>
<feature type="chain" id="PRO_0000450274" description="Type IV pilus assembly protein PilC">
    <location>
        <begin position="1"/>
        <end position="417"/>
    </location>
</feature>
<feature type="transmembrane region" description="Helical" evidence="3">
    <location>
        <begin position="141"/>
        <end position="161"/>
    </location>
</feature>
<feature type="transmembrane region" description="Helical" evidence="3">
    <location>
        <begin position="182"/>
        <end position="202"/>
    </location>
</feature>
<feature type="transmembrane region" description="Helical" evidence="3">
    <location>
        <begin position="235"/>
        <end position="255"/>
    </location>
</feature>
<feature type="transmembrane region" description="Helical" evidence="3">
    <location>
        <begin position="390"/>
        <end position="410"/>
    </location>
</feature>
<reference key="1">
    <citation type="journal article" date="2006" name="Proc. Natl. Acad. Sci. U.S.A.">
        <title>Evolution of sensory complexity recorded in a myxobacterial genome.</title>
        <authorList>
            <person name="Goldman B.S."/>
            <person name="Nierman W.C."/>
            <person name="Kaiser D."/>
            <person name="Slater S.C."/>
            <person name="Durkin A.S."/>
            <person name="Eisen J.A."/>
            <person name="Ronning C.M."/>
            <person name="Barbazuk W.B."/>
            <person name="Blanchard M."/>
            <person name="Field C."/>
            <person name="Halling C."/>
            <person name="Hinkle G."/>
            <person name="Iartchuk O."/>
            <person name="Kim H.S."/>
            <person name="Mackenzie C."/>
            <person name="Madupu R."/>
            <person name="Miller N."/>
            <person name="Shvartsbeyn A."/>
            <person name="Sullivan S.A."/>
            <person name="Vaudin M."/>
            <person name="Wiegand R."/>
            <person name="Kaplan H.B."/>
        </authorList>
    </citation>
    <scope>NUCLEOTIDE SEQUENCE [LARGE SCALE GENOMIC DNA]</scope>
    <source>
        <strain>DK1622</strain>
    </source>
</reference>
<reference key="2">
    <citation type="journal article" date="2016" name="J. Biol. Chem.">
        <title>The Type IV Pilus assembly ATPase PilB of Myxococcus xanthus interacts with the inner membrane platform protein PilC and the nucleotide-binding protein PilM.</title>
        <authorList>
            <person name="Bischof L.F."/>
            <person name="Friedrich C."/>
            <person name="Harms A."/>
            <person name="Soegaard-Andersen L."/>
            <person name="van der Does C."/>
        </authorList>
    </citation>
    <scope>FUNCTION</scope>
    <scope>INTERACTION WITH PILB</scope>
    <scope>SUBCELLULAR LOCATION</scope>
    <source>
        <strain>DK1622</strain>
    </source>
</reference>
<reference evidence="6 7" key="3">
    <citation type="journal article" date="2016" name="Science">
        <title>Architecture of the type IVa pilus machine.</title>
        <authorList>
            <person name="Chang Y.W."/>
            <person name="Rettberg L.A."/>
            <person name="Treuner-Lange A."/>
            <person name="Iwasa J."/>
            <person name="Sogaard-Andersen L."/>
            <person name="Jensen G.J."/>
        </authorList>
    </citation>
    <scope>STRUCTURE BY NMR</scope>
    <scope>DISRUPTION PHENOTYPE</scope>
</reference>
<proteinExistence type="evidence at protein level"/>
<gene>
    <name type="primary">pilC</name>
    <name type="ordered locus">MXAN_5786</name>
</gene>
<protein>
    <recommendedName>
        <fullName>Type IV pilus assembly protein PilC</fullName>
    </recommendedName>
</protein>
<accession>Q1D0A0</accession>
<dbReference type="EMBL" id="CP000113">
    <property type="protein sequence ID" value="ABF92576.1"/>
    <property type="molecule type" value="Genomic_DNA"/>
</dbReference>
<dbReference type="RefSeq" id="WP_011555737.1">
    <property type="nucleotide sequence ID" value="NC_008095.1"/>
</dbReference>
<dbReference type="PDB" id="3JC8">
    <property type="method" value="EM"/>
    <property type="chains" value="Ca/Cb=1-417"/>
</dbReference>
<dbReference type="PDB" id="3JC9">
    <property type="method" value="EM"/>
    <property type="chains" value="Ca/Cb=1-417"/>
</dbReference>
<dbReference type="PDBsum" id="3JC8"/>
<dbReference type="PDBsum" id="3JC9"/>
<dbReference type="SMR" id="Q1D0A0"/>
<dbReference type="STRING" id="246197.MXAN_5786"/>
<dbReference type="EnsemblBacteria" id="ABF92576">
    <property type="protein sequence ID" value="ABF92576"/>
    <property type="gene ID" value="MXAN_5786"/>
</dbReference>
<dbReference type="GeneID" id="41363029"/>
<dbReference type="KEGG" id="mxa:MXAN_5786"/>
<dbReference type="eggNOG" id="COG1459">
    <property type="taxonomic scope" value="Bacteria"/>
</dbReference>
<dbReference type="HOGENOM" id="CLU_035032_2_1_7"/>
<dbReference type="OrthoDB" id="9805682at2"/>
<dbReference type="Proteomes" id="UP000002402">
    <property type="component" value="Chromosome"/>
</dbReference>
<dbReference type="GO" id="GO:0005886">
    <property type="term" value="C:plasma membrane"/>
    <property type="evidence" value="ECO:0007669"/>
    <property type="project" value="UniProtKB-SubCell"/>
</dbReference>
<dbReference type="GO" id="GO:0015628">
    <property type="term" value="P:protein secretion by the type II secretion system"/>
    <property type="evidence" value="ECO:0007669"/>
    <property type="project" value="TreeGrafter"/>
</dbReference>
<dbReference type="FunFam" id="1.20.81.30:FF:000001">
    <property type="entry name" value="Type II secretion system protein F"/>
    <property type="match status" value="2"/>
</dbReference>
<dbReference type="Gene3D" id="1.20.81.30">
    <property type="entry name" value="Type II secretion system (T2SS), domain F"/>
    <property type="match status" value="2"/>
</dbReference>
<dbReference type="InterPro" id="IPR003004">
    <property type="entry name" value="GspF/PilC"/>
</dbReference>
<dbReference type="InterPro" id="IPR018076">
    <property type="entry name" value="T2SS_GspF_dom"/>
</dbReference>
<dbReference type="InterPro" id="IPR042094">
    <property type="entry name" value="T2SS_GspF_sf"/>
</dbReference>
<dbReference type="PANTHER" id="PTHR30012">
    <property type="entry name" value="GENERAL SECRETION PATHWAY PROTEIN"/>
    <property type="match status" value="1"/>
</dbReference>
<dbReference type="PANTHER" id="PTHR30012:SF7">
    <property type="entry name" value="PROTEIN TRANSPORT PROTEIN HOFC HOMOLOG"/>
    <property type="match status" value="1"/>
</dbReference>
<dbReference type="Pfam" id="PF00482">
    <property type="entry name" value="T2SSF"/>
    <property type="match status" value="2"/>
</dbReference>
<dbReference type="PRINTS" id="PR00812">
    <property type="entry name" value="BCTERIALGSPF"/>
</dbReference>
<comment type="function">
    <text evidence="1 4">Essential inner membrane component of the type IV pilus (T4P) that plays a role in surface and host cell adhesion, colonization, biofilm maturation, virulence, and twitching, a form of surface-associated motility facilitated by cycles of extension, adhesion, and retraction of T4P fibers (By similarity). Controls both pilus assembly and disassembly and plays an important role in PilB localization to the complex and ATPase activity (PubMed:26851283).</text>
</comment>
<comment type="subunit">
    <text evidence="2 4">Homotetramer (By similarity). Interacts with PilB (PubMed:26851283).</text>
</comment>
<comment type="subcellular location">
    <subcellularLocation>
        <location evidence="4">Cell inner membrane</location>
        <topology evidence="1">Multi-pass membrane protein</topology>
    </subcellularLocation>
</comment>
<comment type="disruption phenotype">
    <text evidence="5">Deletion mutant show missing type IV cytoplasmic dome and disc but the cytoplasmic ring is still present.</text>
</comment>
<comment type="similarity">
    <text>Belongs to the GSP F family.</text>
</comment>
<keyword id="KW-0002">3D-structure</keyword>
<keyword id="KW-0997">Cell inner membrane</keyword>
<keyword id="KW-1003">Cell membrane</keyword>
<keyword id="KW-0472">Membrane</keyword>
<keyword id="KW-1185">Reference proteome</keyword>
<keyword id="KW-0812">Transmembrane</keyword>
<keyword id="KW-1133">Transmembrane helix</keyword>
<sequence length="417" mass="45142">MAAPAVKSASTPKKATAQFLWEAKTKSGESKKGEMEAMDVEAVNARLKSLGLNPVKVRKKSMLDGDITIPGFGGVEGKDILVFTRQFATMIDAGLPLVQCLDILASQMDNPSFKKVLFAIKSKVEQGSTFADALKEHPKVFDELYVQLCAAGEVGGILDAILNRLAAYREKNEKLKSKVKSAMTYPIIVILVAIGVTAVLLLKVTPVFEKMFADFGSELPGPTQMIVNFSHMAQEYFFHVAGSIVAVVMSFTWSYRQPRGRKFWDKVFLFMPVFGPVLRKVAVARFTRTLGTMISSGVPILDALDVTAKTAGNRTVEDAIIYVRGKIAEGKNIAGPLAETKVFPSMVVQMIGVGEATGAMDTMLNKIADFYDDEVDAAINSLTAMIEPVLMVFLGGVVGGFLIGMYLPIFSLAGAIQ</sequence>